<accession>Q8UD80</accession>
<comment type="function">
    <text evidence="1">Involved in the heme biosynthesis. Catalyzes the aerobic oxidative decarboxylation of propionate groups of rings A and B of coproporphyrinogen-III to yield the vinyl groups in protoporphyrinogen-IX.</text>
</comment>
<comment type="catalytic activity">
    <reaction evidence="1">
        <text>coproporphyrinogen III + O2 + 2 H(+) = protoporphyrinogen IX + 2 CO2 + 2 H2O</text>
        <dbReference type="Rhea" id="RHEA:18257"/>
        <dbReference type="ChEBI" id="CHEBI:15377"/>
        <dbReference type="ChEBI" id="CHEBI:15378"/>
        <dbReference type="ChEBI" id="CHEBI:15379"/>
        <dbReference type="ChEBI" id="CHEBI:16526"/>
        <dbReference type="ChEBI" id="CHEBI:57307"/>
        <dbReference type="ChEBI" id="CHEBI:57309"/>
        <dbReference type="EC" id="1.3.3.3"/>
    </reaction>
</comment>
<comment type="cofactor">
    <cofactor evidence="1">
        <name>a divalent metal cation</name>
        <dbReference type="ChEBI" id="CHEBI:60240"/>
    </cofactor>
</comment>
<comment type="pathway">
    <text evidence="1">Porphyrin-containing compound metabolism; protoporphyrin-IX biosynthesis; protoporphyrinogen-IX from coproporphyrinogen-III (O2 route): step 1/1.</text>
</comment>
<comment type="subunit">
    <text evidence="1">Homodimer.</text>
</comment>
<comment type="subcellular location">
    <subcellularLocation>
        <location evidence="1">Cytoplasm</location>
    </subcellularLocation>
</comment>
<comment type="similarity">
    <text evidence="1">Belongs to the aerobic coproporphyrinogen-III oxidase family.</text>
</comment>
<gene>
    <name evidence="1" type="primary">hemF</name>
    <name type="ordered locus">Atu2247</name>
    <name type="ORF">AGR_C_4089</name>
</gene>
<evidence type="ECO:0000255" key="1">
    <source>
        <dbReference type="HAMAP-Rule" id="MF_00333"/>
    </source>
</evidence>
<name>HEM6_AGRFC</name>
<dbReference type="EC" id="1.3.3.3" evidence="1"/>
<dbReference type="EMBL" id="AE007869">
    <property type="protein sequence ID" value="AAK87989.1"/>
    <property type="molecule type" value="Genomic_DNA"/>
</dbReference>
<dbReference type="PIR" id="AF2852">
    <property type="entry name" value="AF2852"/>
</dbReference>
<dbReference type="PIR" id="D97629">
    <property type="entry name" value="D97629"/>
</dbReference>
<dbReference type="RefSeq" id="NP_355204.1">
    <property type="nucleotide sequence ID" value="NC_003062.2"/>
</dbReference>
<dbReference type="RefSeq" id="WP_010972172.1">
    <property type="nucleotide sequence ID" value="NC_003062.2"/>
</dbReference>
<dbReference type="SMR" id="Q8UD80"/>
<dbReference type="STRING" id="176299.Atu2247"/>
<dbReference type="EnsemblBacteria" id="AAK87989">
    <property type="protein sequence ID" value="AAK87989"/>
    <property type="gene ID" value="Atu2247"/>
</dbReference>
<dbReference type="GeneID" id="1134285"/>
<dbReference type="KEGG" id="atu:Atu2247"/>
<dbReference type="PATRIC" id="fig|176299.10.peg.2258"/>
<dbReference type="eggNOG" id="COG0408">
    <property type="taxonomic scope" value="Bacteria"/>
</dbReference>
<dbReference type="HOGENOM" id="CLU_026169_0_1_5"/>
<dbReference type="OrthoDB" id="9777553at2"/>
<dbReference type="PhylomeDB" id="Q8UD80"/>
<dbReference type="BioCyc" id="AGRO:ATU2247-MONOMER"/>
<dbReference type="UniPathway" id="UPA00251">
    <property type="reaction ID" value="UER00322"/>
</dbReference>
<dbReference type="Proteomes" id="UP000000813">
    <property type="component" value="Chromosome circular"/>
</dbReference>
<dbReference type="GO" id="GO:0005737">
    <property type="term" value="C:cytoplasm"/>
    <property type="evidence" value="ECO:0007669"/>
    <property type="project" value="UniProtKB-SubCell"/>
</dbReference>
<dbReference type="GO" id="GO:0004109">
    <property type="term" value="F:coproporphyrinogen oxidase activity"/>
    <property type="evidence" value="ECO:0007669"/>
    <property type="project" value="UniProtKB-UniRule"/>
</dbReference>
<dbReference type="GO" id="GO:0046872">
    <property type="term" value="F:metal ion binding"/>
    <property type="evidence" value="ECO:0007669"/>
    <property type="project" value="UniProtKB-KW"/>
</dbReference>
<dbReference type="GO" id="GO:0042803">
    <property type="term" value="F:protein homodimerization activity"/>
    <property type="evidence" value="ECO:0000250"/>
    <property type="project" value="UniProtKB"/>
</dbReference>
<dbReference type="GO" id="GO:0006782">
    <property type="term" value="P:protoporphyrinogen IX biosynthetic process"/>
    <property type="evidence" value="ECO:0007669"/>
    <property type="project" value="UniProtKB-UniRule"/>
</dbReference>
<dbReference type="FunFam" id="3.40.1500.10:FF:000005">
    <property type="entry name" value="Oxygen-dependent coproporphyrinogen-III oxidase"/>
    <property type="match status" value="1"/>
</dbReference>
<dbReference type="Gene3D" id="3.40.1500.10">
    <property type="entry name" value="Coproporphyrinogen III oxidase, aerobic"/>
    <property type="match status" value="1"/>
</dbReference>
<dbReference type="HAMAP" id="MF_00333">
    <property type="entry name" value="Coprogen_oxidas"/>
    <property type="match status" value="1"/>
</dbReference>
<dbReference type="InterPro" id="IPR001260">
    <property type="entry name" value="Coprogen_oxidase_aer"/>
</dbReference>
<dbReference type="InterPro" id="IPR036406">
    <property type="entry name" value="Coprogen_oxidase_aer_sf"/>
</dbReference>
<dbReference type="InterPro" id="IPR018375">
    <property type="entry name" value="Coprogen_oxidase_CS"/>
</dbReference>
<dbReference type="NCBIfam" id="NF003727">
    <property type="entry name" value="PRK05330.1"/>
    <property type="match status" value="1"/>
</dbReference>
<dbReference type="PANTHER" id="PTHR10755">
    <property type="entry name" value="COPROPORPHYRINOGEN III OXIDASE, MITOCHONDRIAL"/>
    <property type="match status" value="1"/>
</dbReference>
<dbReference type="PANTHER" id="PTHR10755:SF0">
    <property type="entry name" value="OXYGEN-DEPENDENT COPROPORPHYRINOGEN-III OXIDASE, MITOCHONDRIAL"/>
    <property type="match status" value="1"/>
</dbReference>
<dbReference type="Pfam" id="PF01218">
    <property type="entry name" value="Coprogen_oxidas"/>
    <property type="match status" value="1"/>
</dbReference>
<dbReference type="PIRSF" id="PIRSF000166">
    <property type="entry name" value="Coproporphyri_ox"/>
    <property type="match status" value="1"/>
</dbReference>
<dbReference type="PRINTS" id="PR00073">
    <property type="entry name" value="COPRGNOXDASE"/>
</dbReference>
<dbReference type="SUPFAM" id="SSF102886">
    <property type="entry name" value="Coproporphyrinogen III oxidase"/>
    <property type="match status" value="1"/>
</dbReference>
<dbReference type="PROSITE" id="PS01021">
    <property type="entry name" value="COPROGEN_OXIDASE"/>
    <property type="match status" value="1"/>
</dbReference>
<sequence>MERPILPKGLPEDIEDKKAVAQAWFQHLRDTIVASFETLEDELTGPLSDQEPGRFVQKDWLRDNGEGGGGKMSMMEGRVFEKVGVHTSTVYGEFSPEFRKQIPGAEEDPRFWASGLSLIAHPVNPNVPAVHMNTRMVVTTSHWFGGGADLTPVLGRRRTQQDPDTQLFHRAFEITCNRHPIADYPRYKSWCDEYFFLKHRDEPRGTGGIFFDWLHPDEEKGGWDANFTFVQDVGRAFNLVYPKIVRANFNQNWTEEDRDEQLIRRGRYVEFNLLYDRGTIFGLKTGGNVESILSSLPPVVRWP</sequence>
<feature type="chain" id="PRO_0000109879" description="Oxygen-dependent coproporphyrinogen-III oxidase">
    <location>
        <begin position="1"/>
        <end position="303"/>
    </location>
</feature>
<feature type="region of interest" description="Important for dimerization" evidence="1">
    <location>
        <begin position="268"/>
        <end position="303"/>
    </location>
</feature>
<feature type="active site" description="Proton donor" evidence="1">
    <location>
        <position position="131"/>
    </location>
</feature>
<feature type="binding site" evidence="1">
    <location>
        <position position="117"/>
    </location>
    <ligand>
        <name>substrate</name>
    </ligand>
</feature>
<feature type="binding site" evidence="1">
    <location>
        <position position="121"/>
    </location>
    <ligand>
        <name>a divalent metal cation</name>
        <dbReference type="ChEBI" id="CHEBI:60240"/>
    </ligand>
</feature>
<feature type="binding site" evidence="1">
    <location>
        <position position="131"/>
    </location>
    <ligand>
        <name>a divalent metal cation</name>
        <dbReference type="ChEBI" id="CHEBI:60240"/>
    </ligand>
</feature>
<feature type="binding site" evidence="1">
    <location>
        <begin position="133"/>
        <end position="135"/>
    </location>
    <ligand>
        <name>substrate</name>
    </ligand>
</feature>
<feature type="binding site" evidence="1">
    <location>
        <position position="169"/>
    </location>
    <ligand>
        <name>a divalent metal cation</name>
        <dbReference type="ChEBI" id="CHEBI:60240"/>
    </ligand>
</feature>
<feature type="binding site" evidence="1">
    <location>
        <position position="199"/>
    </location>
    <ligand>
        <name>a divalent metal cation</name>
        <dbReference type="ChEBI" id="CHEBI:60240"/>
    </ligand>
</feature>
<feature type="binding site" evidence="1">
    <location>
        <begin position="286"/>
        <end position="288"/>
    </location>
    <ligand>
        <name>substrate</name>
    </ligand>
</feature>
<feature type="site" description="Important for dimerization" evidence="1">
    <location>
        <position position="199"/>
    </location>
</feature>
<proteinExistence type="inferred from homology"/>
<protein>
    <recommendedName>
        <fullName evidence="1">Oxygen-dependent coproporphyrinogen-III oxidase</fullName>
        <shortName evidence="1">CPO</shortName>
        <shortName evidence="1">Coprogen oxidase</shortName>
        <shortName evidence="1">Coproporphyrinogenase</shortName>
        <ecNumber evidence="1">1.3.3.3</ecNumber>
    </recommendedName>
</protein>
<keyword id="KW-0963">Cytoplasm</keyword>
<keyword id="KW-0350">Heme biosynthesis</keyword>
<keyword id="KW-0479">Metal-binding</keyword>
<keyword id="KW-0560">Oxidoreductase</keyword>
<keyword id="KW-0627">Porphyrin biosynthesis</keyword>
<keyword id="KW-1185">Reference proteome</keyword>
<reference key="1">
    <citation type="journal article" date="2001" name="Science">
        <title>The genome of the natural genetic engineer Agrobacterium tumefaciens C58.</title>
        <authorList>
            <person name="Wood D.W."/>
            <person name="Setubal J.C."/>
            <person name="Kaul R."/>
            <person name="Monks D.E."/>
            <person name="Kitajima J.P."/>
            <person name="Okura V.K."/>
            <person name="Zhou Y."/>
            <person name="Chen L."/>
            <person name="Wood G.E."/>
            <person name="Almeida N.F. Jr."/>
            <person name="Woo L."/>
            <person name="Chen Y."/>
            <person name="Paulsen I.T."/>
            <person name="Eisen J.A."/>
            <person name="Karp P.D."/>
            <person name="Bovee D. Sr."/>
            <person name="Chapman P."/>
            <person name="Clendenning J."/>
            <person name="Deatherage G."/>
            <person name="Gillet W."/>
            <person name="Grant C."/>
            <person name="Kutyavin T."/>
            <person name="Levy R."/>
            <person name="Li M.-J."/>
            <person name="McClelland E."/>
            <person name="Palmieri A."/>
            <person name="Raymond C."/>
            <person name="Rouse G."/>
            <person name="Saenphimmachak C."/>
            <person name="Wu Z."/>
            <person name="Romero P."/>
            <person name="Gordon D."/>
            <person name="Zhang S."/>
            <person name="Yoo H."/>
            <person name="Tao Y."/>
            <person name="Biddle P."/>
            <person name="Jung M."/>
            <person name="Krespan W."/>
            <person name="Perry M."/>
            <person name="Gordon-Kamm B."/>
            <person name="Liao L."/>
            <person name="Kim S."/>
            <person name="Hendrick C."/>
            <person name="Zhao Z.-Y."/>
            <person name="Dolan M."/>
            <person name="Chumley F."/>
            <person name="Tingey S.V."/>
            <person name="Tomb J.-F."/>
            <person name="Gordon M.P."/>
            <person name="Olson M.V."/>
            <person name="Nester E.W."/>
        </authorList>
    </citation>
    <scope>NUCLEOTIDE SEQUENCE [LARGE SCALE GENOMIC DNA]</scope>
    <source>
        <strain>C58 / ATCC 33970</strain>
    </source>
</reference>
<reference key="2">
    <citation type="journal article" date="2001" name="Science">
        <title>Genome sequence of the plant pathogen and biotechnology agent Agrobacterium tumefaciens C58.</title>
        <authorList>
            <person name="Goodner B."/>
            <person name="Hinkle G."/>
            <person name="Gattung S."/>
            <person name="Miller N."/>
            <person name="Blanchard M."/>
            <person name="Qurollo B."/>
            <person name="Goldman B.S."/>
            <person name="Cao Y."/>
            <person name="Askenazi M."/>
            <person name="Halling C."/>
            <person name="Mullin L."/>
            <person name="Houmiel K."/>
            <person name="Gordon J."/>
            <person name="Vaudin M."/>
            <person name="Iartchouk O."/>
            <person name="Epp A."/>
            <person name="Liu F."/>
            <person name="Wollam C."/>
            <person name="Allinger M."/>
            <person name="Doughty D."/>
            <person name="Scott C."/>
            <person name="Lappas C."/>
            <person name="Markelz B."/>
            <person name="Flanagan C."/>
            <person name="Crowell C."/>
            <person name="Gurson J."/>
            <person name="Lomo C."/>
            <person name="Sear C."/>
            <person name="Strub G."/>
            <person name="Cielo C."/>
            <person name="Slater S."/>
        </authorList>
    </citation>
    <scope>NUCLEOTIDE SEQUENCE [LARGE SCALE GENOMIC DNA]</scope>
    <source>
        <strain>C58 / ATCC 33970</strain>
    </source>
</reference>
<organism>
    <name type="scientific">Agrobacterium fabrum (strain C58 / ATCC 33970)</name>
    <name type="common">Agrobacterium tumefaciens (strain C58)</name>
    <dbReference type="NCBI Taxonomy" id="176299"/>
    <lineage>
        <taxon>Bacteria</taxon>
        <taxon>Pseudomonadati</taxon>
        <taxon>Pseudomonadota</taxon>
        <taxon>Alphaproteobacteria</taxon>
        <taxon>Hyphomicrobiales</taxon>
        <taxon>Rhizobiaceae</taxon>
        <taxon>Rhizobium/Agrobacterium group</taxon>
        <taxon>Agrobacterium</taxon>
        <taxon>Agrobacterium tumefaciens complex</taxon>
    </lineage>
</organism>